<accession>P22170</accession>
<accession>B1NLP6</accession>
<protein>
    <recommendedName>
        <fullName>Movement protein TGB2</fullName>
    </recommendedName>
    <alternativeName>
        <fullName>12 kDa protein</fullName>
    </alternativeName>
    <alternativeName>
        <fullName>Triple gene block 2 protein</fullName>
        <shortName>TGBp2</shortName>
    </alternativeName>
</protein>
<name>TGB2_FXMV</name>
<organismHost>
    <name type="scientific">Setaria italica</name>
    <name type="common">Foxtail millet</name>
    <name type="synonym">Panicum italicum</name>
    <dbReference type="NCBI Taxonomy" id="4555"/>
</organismHost>
<organismHost>
    <name type="scientific">Setaria viridis</name>
    <name type="common">Green bristlegrass</name>
    <name type="synonym">Setaria italica subsp. viridis</name>
    <dbReference type="NCBI Taxonomy" id="4556"/>
</organismHost>
<comment type="function">
    <text evidence="1">Plays a role in viral cell-to-cell propagation, by facilitating genome transport to neighboring plant cells through plasmosdesmata,.</text>
</comment>
<comment type="subcellular location">
    <subcellularLocation>
        <location evidence="1">Host endoplasmic reticulum membrane</location>
    </subcellularLocation>
</comment>
<comment type="miscellaneous">
    <text>TGBp1, TGBp2 and TGBp3 seem to act together for cell-to-cell propagation. TGBp1 is the main movement protein that physically cross the plasmodesma with the viral genome. TGBp2 and TGBp3 would facilitate TGBp1 function.</text>
</comment>
<comment type="similarity">
    <text evidence="3">Belongs to the Tymovirales TGBp2 protein family.</text>
</comment>
<reference key="1">
    <citation type="journal article" date="1991" name="J. Gen. Virol.">
        <title>The entire nucleotide sequence of foxtail mosaic virus RNA.</title>
        <authorList>
            <person name="Bancroft J.B."/>
            <person name="Rouleau M."/>
            <person name="Johnston R."/>
            <person name="Prins L."/>
            <person name="Mackie G.A."/>
        </authorList>
    </citation>
    <scope>NUCLEOTIDE SEQUENCE [GENOMIC RNA]</scope>
</reference>
<reference key="2">
    <citation type="journal article" date="2008" name="Arch. Virol.">
        <title>Revised sequence of foxtail mosaic virus reveals a triple gene block structure similar to potato virus X.</title>
        <authorList>
            <person name="Bruun-Rasmussen M."/>
            <person name="Madsen C.T."/>
            <person name="Johansen E."/>
            <person name="Albrechtsen M."/>
        </authorList>
    </citation>
    <scope>NUCLEOTIDE SEQUENCE [GENOMIC RNA]</scope>
</reference>
<reference key="3">
    <citation type="journal article" date="2005" name="Mol. Plant Microbe Interact.">
        <title>A new cell-to-cell transport model for Potexviruses.</title>
        <authorList>
            <person name="Verchot-Lubicz J."/>
        </authorList>
    </citation>
    <scope>REVIEW</scope>
</reference>
<organism>
    <name type="scientific">Foxtail mosaic virus</name>
    <dbReference type="NCBI Taxonomy" id="12179"/>
    <lineage>
        <taxon>Viruses</taxon>
        <taxon>Riboviria</taxon>
        <taxon>Orthornavirae</taxon>
        <taxon>Kitrinoviricota</taxon>
        <taxon>Alsuviricetes</taxon>
        <taxon>Tymovirales</taxon>
        <taxon>Alphaflexiviridae</taxon>
        <taxon>Potexvirus</taxon>
    </lineage>
</organism>
<gene>
    <name type="ORF">ORF3</name>
</gene>
<dbReference type="EMBL" id="M62730">
    <property type="protein sequence ID" value="AAA43828.1"/>
    <property type="molecule type" value="Genomic_RNA"/>
</dbReference>
<dbReference type="EMBL" id="EF630359">
    <property type="protein sequence ID" value="ABW25050.1"/>
    <property type="molecule type" value="Genomic_RNA"/>
</dbReference>
<dbReference type="EMBL" id="EF630360">
    <property type="protein sequence ID" value="ABW25056.1"/>
    <property type="molecule type" value="Genomic_RNA"/>
</dbReference>
<dbReference type="PIR" id="JQ1260">
    <property type="entry name" value="JQ1260"/>
</dbReference>
<dbReference type="RefSeq" id="NP_040990.1">
    <property type="nucleotide sequence ID" value="NC_001483.1"/>
</dbReference>
<dbReference type="SMR" id="P22170"/>
<dbReference type="GeneID" id="1494011"/>
<dbReference type="KEGG" id="vg:1494011"/>
<dbReference type="OrthoDB" id="20634at10239"/>
<dbReference type="Proteomes" id="UP000008623">
    <property type="component" value="Genome"/>
</dbReference>
<dbReference type="GO" id="GO:0044167">
    <property type="term" value="C:host cell endoplasmic reticulum membrane"/>
    <property type="evidence" value="ECO:0007669"/>
    <property type="project" value="UniProtKB-SubCell"/>
</dbReference>
<dbReference type="GO" id="GO:0016020">
    <property type="term" value="C:membrane"/>
    <property type="evidence" value="ECO:0007669"/>
    <property type="project" value="UniProtKB-KW"/>
</dbReference>
<dbReference type="GO" id="GO:0046740">
    <property type="term" value="P:transport of virus in host, cell to cell"/>
    <property type="evidence" value="ECO:0007669"/>
    <property type="project" value="UniProtKB-KW"/>
</dbReference>
<dbReference type="InterPro" id="IPR001896">
    <property type="entry name" value="Plant_vir_prot"/>
</dbReference>
<dbReference type="Pfam" id="PF01307">
    <property type="entry name" value="Plant_vir_prot"/>
    <property type="match status" value="1"/>
</dbReference>
<evidence type="ECO:0000250" key="1"/>
<evidence type="ECO:0000255" key="2"/>
<evidence type="ECO:0000305" key="3"/>
<keyword id="KW-1038">Host endoplasmic reticulum</keyword>
<keyword id="KW-1043">Host membrane</keyword>
<keyword id="KW-0472">Membrane</keyword>
<keyword id="KW-1185">Reference proteome</keyword>
<keyword id="KW-0812">Transmembrane</keyword>
<keyword id="KW-1133">Transmembrane helix</keyword>
<keyword id="KW-0813">Transport</keyword>
<keyword id="KW-0916">Viral movement protein</keyword>
<proteinExistence type="inferred from homology"/>
<feature type="chain" id="PRO_0000222583" description="Movement protein TGB2">
    <location>
        <begin position="1"/>
        <end position="127"/>
    </location>
</feature>
<feature type="topological domain" description="Cytoplasmic" evidence="1">
    <location>
        <begin position="1"/>
        <end position="24"/>
    </location>
</feature>
<feature type="transmembrane region" description="Helical" evidence="2">
    <location>
        <begin position="25"/>
        <end position="45"/>
    </location>
</feature>
<feature type="topological domain" description="Lumenal" evidence="1">
    <location>
        <begin position="46"/>
        <end position="85"/>
    </location>
</feature>
<feature type="transmembrane region" description="Helical" evidence="2">
    <location>
        <begin position="86"/>
        <end position="106"/>
    </location>
</feature>
<feature type="topological domain" description="Cytoplasmic" evidence="1">
    <location>
        <begin position="107"/>
        <end position="127"/>
    </location>
</feature>
<feature type="sequence conflict" description="In Ref. 1; AAA43828." evidence="3" ref="1">
    <original>H</original>
    <variation>Q</variation>
    <location>
        <position position="5"/>
    </location>
</feature>
<feature type="sequence conflict" description="In Ref. 1; AAA43828." evidence="3" ref="1">
    <original>I</original>
    <variation>V</variation>
    <location>
        <position position="31"/>
    </location>
</feature>
<feature type="sequence conflict" description="In Ref. 1; AAA43828." evidence="3" ref="1">
    <original>AFAPPILAAVLFFLTQPYLATRRSRC</original>
    <variation>VSLHQYSPQYSFSSHSHI</variation>
    <location>
        <begin position="88"/>
        <end position="113"/>
    </location>
</feature>
<sequence length="127" mass="13637">MSLSHGTGAPAISTPLTLRPPPDNTKAILTIAIGIAASLVFFMLTRNNLPHVGDNIHSLPHGGSYIDGTKSINYRPPASRYPSSNLLAFAPPILAAVLFFLTQPYLATRRSRCVRCFVVHGACTNHT</sequence>